<reference key="1">
    <citation type="journal article" date="2004" name="Nucleic Acids Res.">
        <title>Genome sequence of Symbiobacterium thermophilum, an uncultivable bacterium that depends on microbial commensalism.</title>
        <authorList>
            <person name="Ueda K."/>
            <person name="Yamashita A."/>
            <person name="Ishikawa J."/>
            <person name="Shimada M."/>
            <person name="Watsuji T."/>
            <person name="Morimura K."/>
            <person name="Ikeda H."/>
            <person name="Hattori M."/>
            <person name="Beppu T."/>
        </authorList>
    </citation>
    <scope>NUCLEOTIDE SEQUENCE [LARGE SCALE GENOMIC DNA]</scope>
    <source>
        <strain>DSM 24528 / JCM 14929 / IAM 14863 / T</strain>
    </source>
</reference>
<keyword id="KW-0560">Oxidoreductase</keyword>
<keyword id="KW-1185">Reference proteome</keyword>
<keyword id="KW-0712">Selenocysteine</keyword>
<evidence type="ECO:0000250" key="1"/>
<evidence type="ECO:0000305" key="2"/>
<accession>Q67KE6</accession>
<organism>
    <name type="scientific">Symbiobacterium thermophilum (strain DSM 24528 / JCM 14929 / IAM 14863 / T)</name>
    <dbReference type="NCBI Taxonomy" id="292459"/>
    <lineage>
        <taxon>Bacteria</taxon>
        <taxon>Bacillati</taxon>
        <taxon>Bacillota</taxon>
        <taxon>Clostridia</taxon>
        <taxon>Eubacteriales</taxon>
        <taxon>Symbiobacteriaceae</taxon>
        <taxon>Symbiobacterium</taxon>
    </lineage>
</organism>
<name>GRDA_SYMTH</name>
<feature type="chain" id="PRO_0000249763" description="Glycine/sarcosine/betaine reductase complex component A">
    <location>
        <begin position="1"/>
        <end position="155"/>
    </location>
</feature>
<feature type="active site" evidence="1">
    <location>
        <position position="43"/>
    </location>
</feature>
<feature type="non-standard amino acid" description="Selenocysteine" evidence="2">
    <location>
        <position position="43"/>
    </location>
</feature>
<comment type="function">
    <text evidence="1">In the first step of glycine, betaine and sarcosine reductases, the substrate is bound to component PB via a Schiff base intermediate. Then the PB-activated substrate is nucleophilically attacked by the selenol anion of component PA to transform it to a carboxymethylated selenoether and the respective amine. By action of component PC, acetyl phosphate is formed, leaving component PA in its oxidized state. Finally component PA becomes reduced by the thioredoxin system to start a new catalytic cycle of reductive deamination (By similarity).</text>
</comment>
<comment type="catalytic activity">
    <reaction>
        <text>acetyl phosphate + [thioredoxin]-disulfide + NH4(+) + H2O = [thioredoxin]-dithiol + glycine + phosphate + H(+)</text>
        <dbReference type="Rhea" id="RHEA:12232"/>
        <dbReference type="Rhea" id="RHEA-COMP:10698"/>
        <dbReference type="Rhea" id="RHEA-COMP:10700"/>
        <dbReference type="ChEBI" id="CHEBI:15377"/>
        <dbReference type="ChEBI" id="CHEBI:15378"/>
        <dbReference type="ChEBI" id="CHEBI:22191"/>
        <dbReference type="ChEBI" id="CHEBI:28938"/>
        <dbReference type="ChEBI" id="CHEBI:29950"/>
        <dbReference type="ChEBI" id="CHEBI:43474"/>
        <dbReference type="ChEBI" id="CHEBI:50058"/>
        <dbReference type="ChEBI" id="CHEBI:57305"/>
        <dbReference type="EC" id="1.21.4.2"/>
    </reaction>
</comment>
<comment type="catalytic activity">
    <reaction>
        <text>acetyl phosphate + methylamine + [thioredoxin]-disulfide + H2O = sarcosine + [thioredoxin]-dithiol + phosphate + H(+)</text>
        <dbReference type="Rhea" id="RHEA:12825"/>
        <dbReference type="Rhea" id="RHEA-COMP:10698"/>
        <dbReference type="Rhea" id="RHEA-COMP:10700"/>
        <dbReference type="ChEBI" id="CHEBI:15377"/>
        <dbReference type="ChEBI" id="CHEBI:15378"/>
        <dbReference type="ChEBI" id="CHEBI:22191"/>
        <dbReference type="ChEBI" id="CHEBI:29950"/>
        <dbReference type="ChEBI" id="CHEBI:43474"/>
        <dbReference type="ChEBI" id="CHEBI:50058"/>
        <dbReference type="ChEBI" id="CHEBI:57433"/>
        <dbReference type="ChEBI" id="CHEBI:59338"/>
        <dbReference type="EC" id="1.21.4.3"/>
    </reaction>
</comment>
<comment type="catalytic activity">
    <reaction>
        <text>acetyl phosphate + trimethylamine + [thioredoxin]-disulfide + H2O = glycine betaine + [thioredoxin]-dithiol + phosphate + H(+)</text>
        <dbReference type="Rhea" id="RHEA:11848"/>
        <dbReference type="Rhea" id="RHEA-COMP:10698"/>
        <dbReference type="Rhea" id="RHEA-COMP:10700"/>
        <dbReference type="ChEBI" id="CHEBI:15377"/>
        <dbReference type="ChEBI" id="CHEBI:15378"/>
        <dbReference type="ChEBI" id="CHEBI:17750"/>
        <dbReference type="ChEBI" id="CHEBI:22191"/>
        <dbReference type="ChEBI" id="CHEBI:29950"/>
        <dbReference type="ChEBI" id="CHEBI:43474"/>
        <dbReference type="ChEBI" id="CHEBI:50058"/>
        <dbReference type="ChEBI" id="CHEBI:58389"/>
        <dbReference type="EC" id="1.21.4.4"/>
    </reaction>
</comment>
<comment type="subunit">
    <text evidence="1">Monomer. Component of the glycine, sarcosine and betaine reductase complexes, together with components B and C (By similarity).</text>
</comment>
<comment type="similarity">
    <text evidence="2">Belongs to the GrdA family.</text>
</comment>
<protein>
    <recommendedName>
        <fullName>Glycine/sarcosine/betaine reductase complex component A</fullName>
        <ecNumber>1.21.4.2</ecNumber>
        <ecNumber>1.21.4.3</ecNumber>
        <ecNumber>1.21.4.4</ecNumber>
    </recommendedName>
    <alternativeName>
        <fullName>Selenoprotein PA</fullName>
    </alternativeName>
    <alternativeName>
        <fullName>Thioredoxin reductase complex selenoprotein A</fullName>
    </alternativeName>
</protein>
<sequence>MELKGKKAIILGDRDGIPGPALEACVRSAGAEVVFASTECFVUTSAGAMDMENQRRVKELAEKYPKEDLVVILGGAEAEASGLAAETVSNGDPAWAGPLAGVQLGLKAYHIFEPEIKEQIDPNVYEEQVSLMEMVLDVEAIVQEVRSIREKYAAW</sequence>
<gene>
    <name type="primary">grdA</name>
    <name type="ordered locus">STH2869</name>
</gene>
<proteinExistence type="inferred from homology"/>
<dbReference type="EC" id="1.21.4.2"/>
<dbReference type="EC" id="1.21.4.3"/>
<dbReference type="EC" id="1.21.4.4"/>
<dbReference type="EMBL" id="AP006840">
    <property type="protein sequence ID" value="BAD41852.1"/>
    <property type="molecule type" value="Genomic_DNA"/>
</dbReference>
<dbReference type="RefSeq" id="WP_011196986.1">
    <property type="nucleotide sequence ID" value="NC_006177.1"/>
</dbReference>
<dbReference type="STRING" id="292459.STH2869"/>
<dbReference type="KEGG" id="sth:STH2869"/>
<dbReference type="eggNOG" id="ENOG50313TT">
    <property type="taxonomic scope" value="Bacteria"/>
</dbReference>
<dbReference type="HOGENOM" id="CLU_142275_0_0_9"/>
<dbReference type="OrthoDB" id="9787487at2"/>
<dbReference type="Proteomes" id="UP000000417">
    <property type="component" value="Chromosome"/>
</dbReference>
<dbReference type="GO" id="GO:0030700">
    <property type="term" value="C:glycine reductase complex"/>
    <property type="evidence" value="ECO:0007669"/>
    <property type="project" value="InterPro"/>
</dbReference>
<dbReference type="GO" id="GO:0033795">
    <property type="term" value="F:betaine reductase activity"/>
    <property type="evidence" value="ECO:0007669"/>
    <property type="project" value="UniProtKB-EC"/>
</dbReference>
<dbReference type="GO" id="GO:0030699">
    <property type="term" value="F:glycine reductase activity"/>
    <property type="evidence" value="ECO:0007669"/>
    <property type="project" value="UniProtKB-UniRule"/>
</dbReference>
<dbReference type="GO" id="GO:0033794">
    <property type="term" value="F:sarcosine reductase activity"/>
    <property type="evidence" value="ECO:0007669"/>
    <property type="project" value="UniProtKB-EC"/>
</dbReference>
<dbReference type="HAMAP" id="MF_00826">
    <property type="entry name" value="GRDA"/>
    <property type="match status" value="1"/>
</dbReference>
<dbReference type="InterPro" id="IPR006812">
    <property type="entry name" value="GRDA"/>
</dbReference>
<dbReference type="NCBIfam" id="NF040748">
    <property type="entry name" value="reduct_selen_A"/>
    <property type="match status" value="1"/>
</dbReference>
<dbReference type="Pfam" id="PF04723">
    <property type="entry name" value="GRDA"/>
    <property type="match status" value="1"/>
</dbReference>
<dbReference type="PIRSF" id="PIRSF000181">
    <property type="entry name" value="Grc_selenoprot_A"/>
    <property type="match status" value="1"/>
</dbReference>